<reference key="1">
    <citation type="submission" date="2003-10" db="EMBL/GenBank/DDBJ databases">
        <title>The complete genome sequence of the alkaliphilic Bacillus clausii KSM-K16.</title>
        <authorList>
            <person name="Takaki Y."/>
            <person name="Kageyama Y."/>
            <person name="Shimamura S."/>
            <person name="Suzuki H."/>
            <person name="Nishi S."/>
            <person name="Hatada Y."/>
            <person name="Kawai S."/>
            <person name="Ito S."/>
            <person name="Horikoshi K."/>
        </authorList>
    </citation>
    <scope>NUCLEOTIDE SEQUENCE [LARGE SCALE GENOMIC DNA]</scope>
    <source>
        <strain>KSM-K16</strain>
    </source>
</reference>
<name>SYFB_SHOC1</name>
<accession>Q5WEJ6</accession>
<keyword id="KW-0030">Aminoacyl-tRNA synthetase</keyword>
<keyword id="KW-0067">ATP-binding</keyword>
<keyword id="KW-0963">Cytoplasm</keyword>
<keyword id="KW-0436">Ligase</keyword>
<keyword id="KW-0460">Magnesium</keyword>
<keyword id="KW-0479">Metal-binding</keyword>
<keyword id="KW-0547">Nucleotide-binding</keyword>
<keyword id="KW-0648">Protein biosynthesis</keyword>
<keyword id="KW-1185">Reference proteome</keyword>
<keyword id="KW-0694">RNA-binding</keyword>
<keyword id="KW-0820">tRNA-binding</keyword>
<organism>
    <name type="scientific">Shouchella clausii (strain KSM-K16)</name>
    <name type="common">Alkalihalobacillus clausii</name>
    <dbReference type="NCBI Taxonomy" id="66692"/>
    <lineage>
        <taxon>Bacteria</taxon>
        <taxon>Bacillati</taxon>
        <taxon>Bacillota</taxon>
        <taxon>Bacilli</taxon>
        <taxon>Bacillales</taxon>
        <taxon>Bacillaceae</taxon>
        <taxon>Shouchella</taxon>
    </lineage>
</organism>
<gene>
    <name evidence="1" type="primary">pheT</name>
    <name type="ordered locus">ABC2679</name>
</gene>
<dbReference type="EC" id="6.1.1.20" evidence="1"/>
<dbReference type="EMBL" id="AP006627">
    <property type="protein sequence ID" value="BAD65214.1"/>
    <property type="molecule type" value="Genomic_DNA"/>
</dbReference>
<dbReference type="RefSeq" id="WP_011247522.1">
    <property type="nucleotide sequence ID" value="NC_006582.1"/>
</dbReference>
<dbReference type="SMR" id="Q5WEJ6"/>
<dbReference type="STRING" id="66692.ABC2679"/>
<dbReference type="KEGG" id="bcl:ABC2679"/>
<dbReference type="eggNOG" id="COG0072">
    <property type="taxonomic scope" value="Bacteria"/>
</dbReference>
<dbReference type="HOGENOM" id="CLU_016891_0_0_9"/>
<dbReference type="OrthoDB" id="9805455at2"/>
<dbReference type="Proteomes" id="UP000001168">
    <property type="component" value="Chromosome"/>
</dbReference>
<dbReference type="GO" id="GO:0009328">
    <property type="term" value="C:phenylalanine-tRNA ligase complex"/>
    <property type="evidence" value="ECO:0007669"/>
    <property type="project" value="TreeGrafter"/>
</dbReference>
<dbReference type="GO" id="GO:0005524">
    <property type="term" value="F:ATP binding"/>
    <property type="evidence" value="ECO:0007669"/>
    <property type="project" value="UniProtKB-UniRule"/>
</dbReference>
<dbReference type="GO" id="GO:0140096">
    <property type="term" value="F:catalytic activity, acting on a protein"/>
    <property type="evidence" value="ECO:0007669"/>
    <property type="project" value="UniProtKB-ARBA"/>
</dbReference>
<dbReference type="GO" id="GO:0000287">
    <property type="term" value="F:magnesium ion binding"/>
    <property type="evidence" value="ECO:0007669"/>
    <property type="project" value="UniProtKB-UniRule"/>
</dbReference>
<dbReference type="GO" id="GO:0004826">
    <property type="term" value="F:phenylalanine-tRNA ligase activity"/>
    <property type="evidence" value="ECO:0007669"/>
    <property type="project" value="UniProtKB-UniRule"/>
</dbReference>
<dbReference type="GO" id="GO:0016740">
    <property type="term" value="F:transferase activity"/>
    <property type="evidence" value="ECO:0007669"/>
    <property type="project" value="UniProtKB-ARBA"/>
</dbReference>
<dbReference type="GO" id="GO:0000049">
    <property type="term" value="F:tRNA binding"/>
    <property type="evidence" value="ECO:0007669"/>
    <property type="project" value="UniProtKB-KW"/>
</dbReference>
<dbReference type="GO" id="GO:0006432">
    <property type="term" value="P:phenylalanyl-tRNA aminoacylation"/>
    <property type="evidence" value="ECO:0007669"/>
    <property type="project" value="UniProtKB-UniRule"/>
</dbReference>
<dbReference type="CDD" id="cd00769">
    <property type="entry name" value="PheRS_beta_core"/>
    <property type="match status" value="1"/>
</dbReference>
<dbReference type="CDD" id="cd02796">
    <property type="entry name" value="tRNA_bind_bactPheRS"/>
    <property type="match status" value="1"/>
</dbReference>
<dbReference type="FunFam" id="2.40.50.140:FF:000045">
    <property type="entry name" value="Phenylalanine--tRNA ligase beta subunit"/>
    <property type="match status" value="1"/>
</dbReference>
<dbReference type="FunFam" id="3.30.70.380:FF:000001">
    <property type="entry name" value="Phenylalanine--tRNA ligase beta subunit"/>
    <property type="match status" value="1"/>
</dbReference>
<dbReference type="FunFam" id="3.30.930.10:FF:000022">
    <property type="entry name" value="Phenylalanine--tRNA ligase beta subunit"/>
    <property type="match status" value="1"/>
</dbReference>
<dbReference type="FunFam" id="3.50.40.10:FF:000001">
    <property type="entry name" value="Phenylalanine--tRNA ligase beta subunit"/>
    <property type="match status" value="1"/>
</dbReference>
<dbReference type="Gene3D" id="3.30.56.10">
    <property type="match status" value="2"/>
</dbReference>
<dbReference type="Gene3D" id="3.30.930.10">
    <property type="entry name" value="Bira Bifunctional Protein, Domain 2"/>
    <property type="match status" value="1"/>
</dbReference>
<dbReference type="Gene3D" id="3.30.70.380">
    <property type="entry name" value="Ferrodoxin-fold anticodon-binding domain"/>
    <property type="match status" value="1"/>
</dbReference>
<dbReference type="Gene3D" id="2.40.50.140">
    <property type="entry name" value="Nucleic acid-binding proteins"/>
    <property type="match status" value="1"/>
</dbReference>
<dbReference type="Gene3D" id="3.50.40.10">
    <property type="entry name" value="Phenylalanyl-trna Synthetase, Chain B, domain 3"/>
    <property type="match status" value="1"/>
</dbReference>
<dbReference type="HAMAP" id="MF_00283">
    <property type="entry name" value="Phe_tRNA_synth_beta1"/>
    <property type="match status" value="1"/>
</dbReference>
<dbReference type="InterPro" id="IPR045864">
    <property type="entry name" value="aa-tRNA-synth_II/BPL/LPL"/>
</dbReference>
<dbReference type="InterPro" id="IPR005146">
    <property type="entry name" value="B3/B4_tRNA-bd"/>
</dbReference>
<dbReference type="InterPro" id="IPR009061">
    <property type="entry name" value="DNA-bd_dom_put_sf"/>
</dbReference>
<dbReference type="InterPro" id="IPR005121">
    <property type="entry name" value="Fdx_antiC-bd"/>
</dbReference>
<dbReference type="InterPro" id="IPR036690">
    <property type="entry name" value="Fdx_antiC-bd_sf"/>
</dbReference>
<dbReference type="InterPro" id="IPR012340">
    <property type="entry name" value="NA-bd_OB-fold"/>
</dbReference>
<dbReference type="InterPro" id="IPR045060">
    <property type="entry name" value="Phe-tRNA-ligase_IIc_bsu"/>
</dbReference>
<dbReference type="InterPro" id="IPR004532">
    <property type="entry name" value="Phe-tRNA-ligase_IIc_bsu_bact"/>
</dbReference>
<dbReference type="InterPro" id="IPR020825">
    <property type="entry name" value="Phe-tRNA_synthase-like_B3/B4"/>
</dbReference>
<dbReference type="InterPro" id="IPR041616">
    <property type="entry name" value="PheRS_beta_core"/>
</dbReference>
<dbReference type="InterPro" id="IPR002547">
    <property type="entry name" value="tRNA-bd_dom"/>
</dbReference>
<dbReference type="InterPro" id="IPR033714">
    <property type="entry name" value="tRNA_bind_bactPheRS"/>
</dbReference>
<dbReference type="InterPro" id="IPR005147">
    <property type="entry name" value="tRNA_synthase_B5-dom"/>
</dbReference>
<dbReference type="NCBIfam" id="TIGR00472">
    <property type="entry name" value="pheT_bact"/>
    <property type="match status" value="1"/>
</dbReference>
<dbReference type="NCBIfam" id="NF045760">
    <property type="entry name" value="YtpR"/>
    <property type="match status" value="1"/>
</dbReference>
<dbReference type="PANTHER" id="PTHR10947:SF0">
    <property type="entry name" value="PHENYLALANINE--TRNA LIGASE BETA SUBUNIT"/>
    <property type="match status" value="1"/>
</dbReference>
<dbReference type="PANTHER" id="PTHR10947">
    <property type="entry name" value="PHENYLALANYL-TRNA SYNTHETASE BETA CHAIN AND LEUCINE-RICH REPEAT-CONTAINING PROTEIN 47"/>
    <property type="match status" value="1"/>
</dbReference>
<dbReference type="Pfam" id="PF03483">
    <property type="entry name" value="B3_4"/>
    <property type="match status" value="1"/>
</dbReference>
<dbReference type="Pfam" id="PF03484">
    <property type="entry name" value="B5"/>
    <property type="match status" value="1"/>
</dbReference>
<dbReference type="Pfam" id="PF03147">
    <property type="entry name" value="FDX-ACB"/>
    <property type="match status" value="1"/>
</dbReference>
<dbReference type="Pfam" id="PF01588">
    <property type="entry name" value="tRNA_bind"/>
    <property type="match status" value="1"/>
</dbReference>
<dbReference type="Pfam" id="PF17759">
    <property type="entry name" value="tRNA_synthFbeta"/>
    <property type="match status" value="1"/>
</dbReference>
<dbReference type="SMART" id="SM00873">
    <property type="entry name" value="B3_4"/>
    <property type="match status" value="1"/>
</dbReference>
<dbReference type="SMART" id="SM00874">
    <property type="entry name" value="B5"/>
    <property type="match status" value="1"/>
</dbReference>
<dbReference type="SMART" id="SM00896">
    <property type="entry name" value="FDX-ACB"/>
    <property type="match status" value="1"/>
</dbReference>
<dbReference type="SUPFAM" id="SSF54991">
    <property type="entry name" value="Anticodon-binding domain of PheRS"/>
    <property type="match status" value="1"/>
</dbReference>
<dbReference type="SUPFAM" id="SSF55681">
    <property type="entry name" value="Class II aaRS and biotin synthetases"/>
    <property type="match status" value="1"/>
</dbReference>
<dbReference type="SUPFAM" id="SSF50249">
    <property type="entry name" value="Nucleic acid-binding proteins"/>
    <property type="match status" value="1"/>
</dbReference>
<dbReference type="SUPFAM" id="SSF56037">
    <property type="entry name" value="PheT/TilS domain"/>
    <property type="match status" value="1"/>
</dbReference>
<dbReference type="SUPFAM" id="SSF46955">
    <property type="entry name" value="Putative DNA-binding domain"/>
    <property type="match status" value="1"/>
</dbReference>
<dbReference type="PROSITE" id="PS51483">
    <property type="entry name" value="B5"/>
    <property type="match status" value="1"/>
</dbReference>
<dbReference type="PROSITE" id="PS51447">
    <property type="entry name" value="FDX_ACB"/>
    <property type="match status" value="1"/>
</dbReference>
<dbReference type="PROSITE" id="PS50886">
    <property type="entry name" value="TRBD"/>
    <property type="match status" value="1"/>
</dbReference>
<protein>
    <recommendedName>
        <fullName evidence="1">Phenylalanine--tRNA ligase beta subunit</fullName>
        <ecNumber evidence="1">6.1.1.20</ecNumber>
    </recommendedName>
    <alternativeName>
        <fullName evidence="1">Phenylalanyl-tRNA synthetase beta subunit</fullName>
        <shortName evidence="1">PheRS</shortName>
    </alternativeName>
</protein>
<feature type="chain" id="PRO_0000126843" description="Phenylalanine--tRNA ligase beta subunit">
    <location>
        <begin position="1"/>
        <end position="808"/>
    </location>
</feature>
<feature type="domain" description="tRNA-binding" evidence="1">
    <location>
        <begin position="40"/>
        <end position="157"/>
    </location>
</feature>
<feature type="domain" description="B5" evidence="1">
    <location>
        <begin position="411"/>
        <end position="486"/>
    </location>
</feature>
<feature type="domain" description="FDX-ACB" evidence="1">
    <location>
        <begin position="714"/>
        <end position="807"/>
    </location>
</feature>
<feature type="binding site" evidence="1">
    <location>
        <position position="464"/>
    </location>
    <ligand>
        <name>Mg(2+)</name>
        <dbReference type="ChEBI" id="CHEBI:18420"/>
        <note>shared with alpha subunit</note>
    </ligand>
</feature>
<feature type="binding site" evidence="1">
    <location>
        <position position="470"/>
    </location>
    <ligand>
        <name>Mg(2+)</name>
        <dbReference type="ChEBI" id="CHEBI:18420"/>
        <note>shared with alpha subunit</note>
    </ligand>
</feature>
<feature type="binding site" evidence="1">
    <location>
        <position position="473"/>
    </location>
    <ligand>
        <name>Mg(2+)</name>
        <dbReference type="ChEBI" id="CHEBI:18420"/>
        <note>shared with alpha subunit</note>
    </ligand>
</feature>
<feature type="binding site" evidence="1">
    <location>
        <position position="474"/>
    </location>
    <ligand>
        <name>Mg(2+)</name>
        <dbReference type="ChEBI" id="CHEBI:18420"/>
        <note>shared with alpha subunit</note>
    </ligand>
</feature>
<sequence length="808" mass="88858">MLVSYKWLQEYIEIGDISPQEIAEKMTRSGIEIDFIHERNKGATNVVVGYVAEVAPHPDADKLNVCQVDIGEEERVQIVCGAPNVSSGQYVAVAKVGARLPGGIKIKKAKLRGQHSNGMICSLQELGIDSKLVPKGYVDGIYVFPETQSVEPGQDALAIFELNDSVLELDLTPNRSDCMHMLGVAYELAALYDRPIKMPKTKVKEVIESADGYINVSVENGEDTPFYQALVIKDVKIGPSPSWLQNRLMAAGIRPISNVVDVTNYVLLEYGQPLHAFDYHALASKSIHVRRAKAEEAFTTLDGEKRTLSPEQLVVTNGREPVALAGVMGGLHSEVTAATTTVVLEAAAFHPTVVRRSARLAGLRSDSSARFEKGINQERVSEAARRAAYLIQEIAGGIVLSGAAIADARVRSERVIALDLDKMNERIGTNLSIMEVAALMRRLQFPCEKVGSDLHVTVPHRRGDITIPEDLYEEVARLYGYDELPSTLPVGNTTQGKRTAEQAKRRKMEAYLRSAGLSEAISYALTSSEKAALFAAETIKPIQVAMPMSEERSTMRTSLLPHLYDICTYNLNRKNNDVLLYERGSVFLSEQETLTELPTEQERLAVLLSGTYMSHPWQGEKKAVDFYVLKGIAEGLMETLGLSEQIEYKPDVRPGFHPGRTANVLLKGESIGFLAQVHPSTQKALDLNETYVLELNVDALFAAETEALIYRGIPRYPAITRDMALVVSKETTAAELMAIIREAGGELLETVSIFDVYEGEHMESGKKSIAFSLTYRHAERTLTDEEASLAHEGIVAEVQKQTGAVLRA</sequence>
<evidence type="ECO:0000255" key="1">
    <source>
        <dbReference type="HAMAP-Rule" id="MF_00283"/>
    </source>
</evidence>
<comment type="catalytic activity">
    <reaction evidence="1">
        <text>tRNA(Phe) + L-phenylalanine + ATP = L-phenylalanyl-tRNA(Phe) + AMP + diphosphate + H(+)</text>
        <dbReference type="Rhea" id="RHEA:19413"/>
        <dbReference type="Rhea" id="RHEA-COMP:9668"/>
        <dbReference type="Rhea" id="RHEA-COMP:9699"/>
        <dbReference type="ChEBI" id="CHEBI:15378"/>
        <dbReference type="ChEBI" id="CHEBI:30616"/>
        <dbReference type="ChEBI" id="CHEBI:33019"/>
        <dbReference type="ChEBI" id="CHEBI:58095"/>
        <dbReference type="ChEBI" id="CHEBI:78442"/>
        <dbReference type="ChEBI" id="CHEBI:78531"/>
        <dbReference type="ChEBI" id="CHEBI:456215"/>
        <dbReference type="EC" id="6.1.1.20"/>
    </reaction>
</comment>
<comment type="cofactor">
    <cofactor evidence="1">
        <name>Mg(2+)</name>
        <dbReference type="ChEBI" id="CHEBI:18420"/>
    </cofactor>
    <text evidence="1">Binds 2 magnesium ions per tetramer.</text>
</comment>
<comment type="subunit">
    <text evidence="1">Tetramer of two alpha and two beta subunits.</text>
</comment>
<comment type="subcellular location">
    <subcellularLocation>
        <location evidence="1">Cytoplasm</location>
    </subcellularLocation>
</comment>
<comment type="similarity">
    <text evidence="1">Belongs to the phenylalanyl-tRNA synthetase beta subunit family. Type 1 subfamily.</text>
</comment>
<proteinExistence type="inferred from homology"/>